<dbReference type="EC" id="3.1.1.29" evidence="1"/>
<dbReference type="EMBL" id="AP008937">
    <property type="protein sequence ID" value="BAG26550.1"/>
    <property type="molecule type" value="Genomic_DNA"/>
</dbReference>
<dbReference type="RefSeq" id="WP_003684038.1">
    <property type="nucleotide sequence ID" value="NC_010610.1"/>
</dbReference>
<dbReference type="SMR" id="B2GA68"/>
<dbReference type="KEGG" id="lfe:LAF_0214"/>
<dbReference type="eggNOG" id="COG0193">
    <property type="taxonomic scope" value="Bacteria"/>
</dbReference>
<dbReference type="HOGENOM" id="CLU_062456_4_1_9"/>
<dbReference type="Proteomes" id="UP000001697">
    <property type="component" value="Chromosome"/>
</dbReference>
<dbReference type="GO" id="GO:0005737">
    <property type="term" value="C:cytoplasm"/>
    <property type="evidence" value="ECO:0007669"/>
    <property type="project" value="UniProtKB-SubCell"/>
</dbReference>
<dbReference type="GO" id="GO:0004045">
    <property type="term" value="F:peptidyl-tRNA hydrolase activity"/>
    <property type="evidence" value="ECO:0007669"/>
    <property type="project" value="UniProtKB-UniRule"/>
</dbReference>
<dbReference type="GO" id="GO:0000049">
    <property type="term" value="F:tRNA binding"/>
    <property type="evidence" value="ECO:0007669"/>
    <property type="project" value="UniProtKB-UniRule"/>
</dbReference>
<dbReference type="GO" id="GO:0006515">
    <property type="term" value="P:protein quality control for misfolded or incompletely synthesized proteins"/>
    <property type="evidence" value="ECO:0007669"/>
    <property type="project" value="UniProtKB-UniRule"/>
</dbReference>
<dbReference type="GO" id="GO:0072344">
    <property type="term" value="P:rescue of stalled ribosome"/>
    <property type="evidence" value="ECO:0007669"/>
    <property type="project" value="UniProtKB-UniRule"/>
</dbReference>
<dbReference type="CDD" id="cd00462">
    <property type="entry name" value="PTH"/>
    <property type="match status" value="1"/>
</dbReference>
<dbReference type="FunFam" id="3.40.50.1470:FF:000001">
    <property type="entry name" value="Peptidyl-tRNA hydrolase"/>
    <property type="match status" value="1"/>
</dbReference>
<dbReference type="Gene3D" id="3.40.50.1470">
    <property type="entry name" value="Peptidyl-tRNA hydrolase"/>
    <property type="match status" value="1"/>
</dbReference>
<dbReference type="HAMAP" id="MF_00083">
    <property type="entry name" value="Pept_tRNA_hydro_bact"/>
    <property type="match status" value="1"/>
</dbReference>
<dbReference type="InterPro" id="IPR001328">
    <property type="entry name" value="Pept_tRNA_hydro"/>
</dbReference>
<dbReference type="InterPro" id="IPR018171">
    <property type="entry name" value="Pept_tRNA_hydro_CS"/>
</dbReference>
<dbReference type="InterPro" id="IPR036416">
    <property type="entry name" value="Pept_tRNA_hydro_sf"/>
</dbReference>
<dbReference type="NCBIfam" id="TIGR00447">
    <property type="entry name" value="pth"/>
    <property type="match status" value="1"/>
</dbReference>
<dbReference type="PANTHER" id="PTHR17224">
    <property type="entry name" value="PEPTIDYL-TRNA HYDROLASE"/>
    <property type="match status" value="1"/>
</dbReference>
<dbReference type="PANTHER" id="PTHR17224:SF1">
    <property type="entry name" value="PEPTIDYL-TRNA HYDROLASE"/>
    <property type="match status" value="1"/>
</dbReference>
<dbReference type="Pfam" id="PF01195">
    <property type="entry name" value="Pept_tRNA_hydro"/>
    <property type="match status" value="1"/>
</dbReference>
<dbReference type="SUPFAM" id="SSF53178">
    <property type="entry name" value="Peptidyl-tRNA hydrolase-like"/>
    <property type="match status" value="1"/>
</dbReference>
<dbReference type="PROSITE" id="PS01195">
    <property type="entry name" value="PEPT_TRNA_HYDROL_1"/>
    <property type="match status" value="1"/>
</dbReference>
<keyword id="KW-0963">Cytoplasm</keyword>
<keyword id="KW-0378">Hydrolase</keyword>
<keyword id="KW-1185">Reference proteome</keyword>
<keyword id="KW-0694">RNA-binding</keyword>
<keyword id="KW-0820">tRNA-binding</keyword>
<accession>B2GA68</accession>
<proteinExistence type="inferred from homology"/>
<reference key="1">
    <citation type="journal article" date="2008" name="DNA Res.">
        <title>Comparative genome analysis of Lactobacillus reuteri and Lactobacillus fermentum reveal a genomic island for reuterin and cobalamin production.</title>
        <authorList>
            <person name="Morita H."/>
            <person name="Toh H."/>
            <person name="Fukuda S."/>
            <person name="Horikawa H."/>
            <person name="Oshima K."/>
            <person name="Suzuki T."/>
            <person name="Murakami M."/>
            <person name="Hisamatsu S."/>
            <person name="Kato Y."/>
            <person name="Takizawa T."/>
            <person name="Fukuoka H."/>
            <person name="Yoshimura T."/>
            <person name="Itoh K."/>
            <person name="O'Sullivan D.J."/>
            <person name="McKay L.L."/>
            <person name="Ohno H."/>
            <person name="Kikuchi J."/>
            <person name="Masaoka T."/>
            <person name="Hattori M."/>
        </authorList>
    </citation>
    <scope>NUCLEOTIDE SEQUENCE [LARGE SCALE GENOMIC DNA]</scope>
    <source>
        <strain>NBRC 3956 / LMG 18251</strain>
    </source>
</reference>
<gene>
    <name evidence="1" type="primary">pth</name>
    <name type="ordered locus">LAF_0214</name>
</gene>
<comment type="function">
    <text evidence="1">Hydrolyzes ribosome-free peptidyl-tRNAs (with 1 or more amino acids incorporated), which drop off the ribosome during protein synthesis, or as a result of ribosome stalling.</text>
</comment>
<comment type="function">
    <text evidence="1">Catalyzes the release of premature peptidyl moieties from peptidyl-tRNA molecules trapped in stalled 50S ribosomal subunits, and thus maintains levels of free tRNAs and 50S ribosomes.</text>
</comment>
<comment type="catalytic activity">
    <reaction evidence="1">
        <text>an N-acyl-L-alpha-aminoacyl-tRNA + H2O = an N-acyl-L-amino acid + a tRNA + H(+)</text>
        <dbReference type="Rhea" id="RHEA:54448"/>
        <dbReference type="Rhea" id="RHEA-COMP:10123"/>
        <dbReference type="Rhea" id="RHEA-COMP:13883"/>
        <dbReference type="ChEBI" id="CHEBI:15377"/>
        <dbReference type="ChEBI" id="CHEBI:15378"/>
        <dbReference type="ChEBI" id="CHEBI:59874"/>
        <dbReference type="ChEBI" id="CHEBI:78442"/>
        <dbReference type="ChEBI" id="CHEBI:138191"/>
        <dbReference type="EC" id="3.1.1.29"/>
    </reaction>
</comment>
<comment type="subunit">
    <text evidence="1">Monomer.</text>
</comment>
<comment type="subcellular location">
    <subcellularLocation>
        <location evidence="1">Cytoplasm</location>
    </subcellularLocation>
</comment>
<comment type="similarity">
    <text evidence="1">Belongs to the PTH family.</text>
</comment>
<organism>
    <name type="scientific">Limosilactobacillus fermentum (strain NBRC 3956 / LMG 18251)</name>
    <name type="common">Lactobacillus fermentum</name>
    <dbReference type="NCBI Taxonomy" id="334390"/>
    <lineage>
        <taxon>Bacteria</taxon>
        <taxon>Bacillati</taxon>
        <taxon>Bacillota</taxon>
        <taxon>Bacilli</taxon>
        <taxon>Lactobacillales</taxon>
        <taxon>Lactobacillaceae</taxon>
        <taxon>Limosilactobacillus</taxon>
    </lineage>
</organism>
<name>PTH_LIMF3</name>
<evidence type="ECO:0000255" key="1">
    <source>
        <dbReference type="HAMAP-Rule" id="MF_00083"/>
    </source>
</evidence>
<protein>
    <recommendedName>
        <fullName evidence="1">Peptidyl-tRNA hydrolase</fullName>
        <shortName evidence="1">Pth</shortName>
        <ecNumber evidence="1">3.1.1.29</ecNumber>
    </recommendedName>
</protein>
<feature type="chain" id="PRO_1000092952" description="Peptidyl-tRNA hydrolase">
    <location>
        <begin position="1"/>
        <end position="186"/>
    </location>
</feature>
<feature type="active site" description="Proton acceptor" evidence="1">
    <location>
        <position position="19"/>
    </location>
</feature>
<feature type="binding site" evidence="1">
    <location>
        <position position="14"/>
    </location>
    <ligand>
        <name>tRNA</name>
        <dbReference type="ChEBI" id="CHEBI:17843"/>
    </ligand>
</feature>
<feature type="binding site" evidence="1">
    <location>
        <position position="65"/>
    </location>
    <ligand>
        <name>tRNA</name>
        <dbReference type="ChEBI" id="CHEBI:17843"/>
    </ligand>
</feature>
<feature type="binding site" evidence="1">
    <location>
        <position position="67"/>
    </location>
    <ligand>
        <name>tRNA</name>
        <dbReference type="ChEBI" id="CHEBI:17843"/>
    </ligand>
</feature>
<feature type="binding site" evidence="1">
    <location>
        <position position="113"/>
    </location>
    <ligand>
        <name>tRNA</name>
        <dbReference type="ChEBI" id="CHEBI:17843"/>
    </ligand>
</feature>
<feature type="site" description="Discriminates between blocked and unblocked aminoacyl-tRNA" evidence="1">
    <location>
        <position position="9"/>
    </location>
</feature>
<feature type="site" description="Stabilizes the basic form of H active site to accept a proton" evidence="1">
    <location>
        <position position="92"/>
    </location>
</feature>
<sequence>MKMIVGLGNIGTRYDETRHNAGFMVVEQLARDFHLGAFTHEKVEAVTVTGLINGQKVMLVKPTTFMNESGRAVKPLMEYYDIALDDLIVVSDDLDMPVGKIKLKQRGASGGHNGLKSLIDHLGTREFNRVKLGIDHPKFGSVVSHVLGRFDTEERPVFEGAVLQAEQALIKWVQGTSFDQLMNEYN</sequence>